<gene>
    <name evidence="1" type="primary">rsmG</name>
    <name type="ordered locus">Sbal223_4320</name>
</gene>
<organism>
    <name type="scientific">Shewanella baltica (strain OS223)</name>
    <dbReference type="NCBI Taxonomy" id="407976"/>
    <lineage>
        <taxon>Bacteria</taxon>
        <taxon>Pseudomonadati</taxon>
        <taxon>Pseudomonadota</taxon>
        <taxon>Gammaproteobacteria</taxon>
        <taxon>Alteromonadales</taxon>
        <taxon>Shewanellaceae</taxon>
        <taxon>Shewanella</taxon>
    </lineage>
</organism>
<comment type="function">
    <text evidence="1">Specifically methylates the N7 position of guanine in position 527 of 16S rRNA.</text>
</comment>
<comment type="catalytic activity">
    <reaction evidence="1">
        <text>guanosine(527) in 16S rRNA + S-adenosyl-L-methionine = N(7)-methylguanosine(527) in 16S rRNA + S-adenosyl-L-homocysteine</text>
        <dbReference type="Rhea" id="RHEA:42732"/>
        <dbReference type="Rhea" id="RHEA-COMP:10209"/>
        <dbReference type="Rhea" id="RHEA-COMP:10210"/>
        <dbReference type="ChEBI" id="CHEBI:57856"/>
        <dbReference type="ChEBI" id="CHEBI:59789"/>
        <dbReference type="ChEBI" id="CHEBI:74269"/>
        <dbReference type="ChEBI" id="CHEBI:74480"/>
        <dbReference type="EC" id="2.1.1.170"/>
    </reaction>
</comment>
<comment type="subcellular location">
    <subcellularLocation>
        <location evidence="1">Cytoplasm</location>
    </subcellularLocation>
</comment>
<comment type="similarity">
    <text evidence="1">Belongs to the methyltransferase superfamily. RNA methyltransferase RsmG family.</text>
</comment>
<sequence length="206" mass="23383">MLSAQLEAYLAEINLPATAEQKKQLIDFVGMLNKWNKAYNLTSVRDPEAMLIRHIMDSLVVSKHLQGERFIDVGTGPGLPGIPLAIMNPDKQFVLLDSLGKRIRFQKQVSFELGIHNISSVESRVEAYQPEQKFDGVLSRAFASIQDMLTWCHHLPAEHGQFYALKGQLNDEEMQHIPSGFAVKEVIELKVPKLDEQRHLLKIIKE</sequence>
<accession>B8EDW0</accession>
<feature type="chain" id="PRO_1000118197" description="Ribosomal RNA small subunit methyltransferase G">
    <location>
        <begin position="1"/>
        <end position="206"/>
    </location>
</feature>
<feature type="binding site" evidence="1">
    <location>
        <position position="74"/>
    </location>
    <ligand>
        <name>S-adenosyl-L-methionine</name>
        <dbReference type="ChEBI" id="CHEBI:59789"/>
    </ligand>
</feature>
<feature type="binding site" evidence="1">
    <location>
        <position position="79"/>
    </location>
    <ligand>
        <name>S-adenosyl-L-methionine</name>
        <dbReference type="ChEBI" id="CHEBI:59789"/>
    </ligand>
</feature>
<feature type="binding site" evidence="1">
    <location>
        <begin position="125"/>
        <end position="126"/>
    </location>
    <ligand>
        <name>S-adenosyl-L-methionine</name>
        <dbReference type="ChEBI" id="CHEBI:59789"/>
    </ligand>
</feature>
<feature type="binding site" evidence="1">
    <location>
        <position position="140"/>
    </location>
    <ligand>
        <name>S-adenosyl-L-methionine</name>
        <dbReference type="ChEBI" id="CHEBI:59789"/>
    </ligand>
</feature>
<proteinExistence type="inferred from homology"/>
<name>RSMG_SHEB2</name>
<keyword id="KW-0963">Cytoplasm</keyword>
<keyword id="KW-0489">Methyltransferase</keyword>
<keyword id="KW-0698">rRNA processing</keyword>
<keyword id="KW-0949">S-adenosyl-L-methionine</keyword>
<keyword id="KW-0808">Transferase</keyword>
<dbReference type="EC" id="2.1.1.170" evidence="1"/>
<dbReference type="EMBL" id="CP001252">
    <property type="protein sequence ID" value="ACK48786.1"/>
    <property type="molecule type" value="Genomic_DNA"/>
</dbReference>
<dbReference type="RefSeq" id="WP_006083835.1">
    <property type="nucleotide sequence ID" value="NC_011663.1"/>
</dbReference>
<dbReference type="SMR" id="B8EDW0"/>
<dbReference type="GeneID" id="11774470"/>
<dbReference type="KEGG" id="sbp:Sbal223_4320"/>
<dbReference type="HOGENOM" id="CLU_065341_2_0_6"/>
<dbReference type="Proteomes" id="UP000002507">
    <property type="component" value="Chromosome"/>
</dbReference>
<dbReference type="GO" id="GO:0005829">
    <property type="term" value="C:cytosol"/>
    <property type="evidence" value="ECO:0007669"/>
    <property type="project" value="TreeGrafter"/>
</dbReference>
<dbReference type="GO" id="GO:0070043">
    <property type="term" value="F:rRNA (guanine-N7-)-methyltransferase activity"/>
    <property type="evidence" value="ECO:0007669"/>
    <property type="project" value="UniProtKB-UniRule"/>
</dbReference>
<dbReference type="CDD" id="cd02440">
    <property type="entry name" value="AdoMet_MTases"/>
    <property type="match status" value="1"/>
</dbReference>
<dbReference type="FunFam" id="3.40.50.150:FF:000032">
    <property type="entry name" value="Ribosomal RNA small subunit methyltransferase G"/>
    <property type="match status" value="1"/>
</dbReference>
<dbReference type="Gene3D" id="3.40.50.150">
    <property type="entry name" value="Vaccinia Virus protein VP39"/>
    <property type="match status" value="1"/>
</dbReference>
<dbReference type="HAMAP" id="MF_00074">
    <property type="entry name" value="16SrRNA_methyltr_G"/>
    <property type="match status" value="1"/>
</dbReference>
<dbReference type="InterPro" id="IPR003682">
    <property type="entry name" value="rRNA_ssu_MeTfrase_G"/>
</dbReference>
<dbReference type="InterPro" id="IPR029063">
    <property type="entry name" value="SAM-dependent_MTases_sf"/>
</dbReference>
<dbReference type="NCBIfam" id="TIGR00138">
    <property type="entry name" value="rsmG_gidB"/>
    <property type="match status" value="1"/>
</dbReference>
<dbReference type="PANTHER" id="PTHR31760">
    <property type="entry name" value="S-ADENOSYL-L-METHIONINE-DEPENDENT METHYLTRANSFERASES SUPERFAMILY PROTEIN"/>
    <property type="match status" value="1"/>
</dbReference>
<dbReference type="PANTHER" id="PTHR31760:SF0">
    <property type="entry name" value="S-ADENOSYL-L-METHIONINE-DEPENDENT METHYLTRANSFERASES SUPERFAMILY PROTEIN"/>
    <property type="match status" value="1"/>
</dbReference>
<dbReference type="Pfam" id="PF02527">
    <property type="entry name" value="GidB"/>
    <property type="match status" value="1"/>
</dbReference>
<dbReference type="PIRSF" id="PIRSF003078">
    <property type="entry name" value="GidB"/>
    <property type="match status" value="1"/>
</dbReference>
<dbReference type="SUPFAM" id="SSF53335">
    <property type="entry name" value="S-adenosyl-L-methionine-dependent methyltransferases"/>
    <property type="match status" value="1"/>
</dbReference>
<protein>
    <recommendedName>
        <fullName evidence="1">Ribosomal RNA small subunit methyltransferase G</fullName>
        <ecNumber evidence="1">2.1.1.170</ecNumber>
    </recommendedName>
    <alternativeName>
        <fullName evidence="1">16S rRNA 7-methylguanosine methyltransferase</fullName>
        <shortName evidence="1">16S rRNA m7G methyltransferase</shortName>
    </alternativeName>
</protein>
<reference key="1">
    <citation type="submission" date="2008-12" db="EMBL/GenBank/DDBJ databases">
        <title>Complete sequence of chromosome of Shewanella baltica OS223.</title>
        <authorList>
            <consortium name="US DOE Joint Genome Institute"/>
            <person name="Lucas S."/>
            <person name="Copeland A."/>
            <person name="Lapidus A."/>
            <person name="Glavina del Rio T."/>
            <person name="Dalin E."/>
            <person name="Tice H."/>
            <person name="Bruce D."/>
            <person name="Goodwin L."/>
            <person name="Pitluck S."/>
            <person name="Chertkov O."/>
            <person name="Meincke L."/>
            <person name="Brettin T."/>
            <person name="Detter J.C."/>
            <person name="Han C."/>
            <person name="Kuske C.R."/>
            <person name="Larimer F."/>
            <person name="Land M."/>
            <person name="Hauser L."/>
            <person name="Kyrpides N."/>
            <person name="Ovchinnikova G."/>
            <person name="Brettar I."/>
            <person name="Rodrigues J."/>
            <person name="Konstantinidis K."/>
            <person name="Tiedje J."/>
        </authorList>
    </citation>
    <scope>NUCLEOTIDE SEQUENCE [LARGE SCALE GENOMIC DNA]</scope>
    <source>
        <strain>OS223</strain>
    </source>
</reference>
<evidence type="ECO:0000255" key="1">
    <source>
        <dbReference type="HAMAP-Rule" id="MF_00074"/>
    </source>
</evidence>